<evidence type="ECO:0000250" key="1"/>
<evidence type="ECO:0000255" key="2">
    <source>
        <dbReference type="HAMAP-Rule" id="MF_00023"/>
    </source>
</evidence>
<evidence type="ECO:0000269" key="3">
    <source>
    </source>
</evidence>
<evidence type="ECO:0000269" key="4">
    <source>
    </source>
</evidence>
<evidence type="ECO:0000303" key="5">
    <source>
    </source>
</evidence>
<evidence type="ECO:0000305" key="6"/>
<organism>
    <name type="scientific">Salmonella typhimurium (strain LT2 / SGSC1412 / ATCC 700720)</name>
    <dbReference type="NCBI Taxonomy" id="99287"/>
    <lineage>
        <taxon>Bacteria</taxon>
        <taxon>Pseudomonadati</taxon>
        <taxon>Pseudomonadota</taxon>
        <taxon>Gammaproteobacteria</taxon>
        <taxon>Enterobacterales</taxon>
        <taxon>Enterobacteriaceae</taxon>
        <taxon>Salmonella</taxon>
    </lineage>
</organism>
<sequence>MTKKKAHKPGSATIALNKRARHEYFIEEEFEAGLALQGWEVKSLRAGKANIGDSYVILKDGEAWLFGANFTPMAVASTHVVCDPTRTRKLLLNQRELDSLYGRINREGYTVVALSLYWKNAWCKVKIGVAKGKKQHDKRSDLKEREWQLDKARIMKNAGR</sequence>
<feature type="initiator methionine" description="Removed" evidence="1">
    <location>
        <position position="1"/>
    </location>
</feature>
<feature type="chain" id="PRO_0000103023" description="SsrA-binding protein">
    <location>
        <begin position="2"/>
        <end position="160"/>
    </location>
</feature>
<feature type="sequence conflict" description="In Ref. 2; U06139." evidence="6" ref="2">
    <original>G</original>
    <variation>A</variation>
    <location>
        <position position="10"/>
    </location>
</feature>
<feature type="sequence conflict" description="In Ref. 2; U06139." evidence="6" ref="2">
    <location>
        <position position="20"/>
    </location>
</feature>
<comment type="function">
    <text evidence="2">Required for rescue of stalled ribosomes mediated by trans-translation. Binds to transfer-messenger RNA (tmRNA), required for stable association of tmRNA with ribosomes. tmRNA and SmpB together mimic tRNA shape, replacing the anticodon stem-loop with SmpB. tmRNA is encoded by the ssrA gene; the 2 termini fold to resemble tRNA(Ala) and it encodes a 'tag peptide', a short internal open reading frame. During trans-translation Ala-aminoacylated tmRNA acts like a tRNA, entering the A-site of stalled ribosomes, displacing the stalled mRNA. The ribosome then switches to translate the ORF on the tmRNA; the nascent peptide is terminated with the 'tag peptide' encoded by the tmRNA and targeted for degradation. The ribosome is freed to recommence translation, which seems to be the essential function of trans-translation.</text>
</comment>
<comment type="subcellular location">
    <subcellularLocation>
        <location evidence="2">Cytoplasm</location>
    </subcellularLocation>
    <text evidence="2">The tmRNA-SmpB complex associates with stalled 70S ribosomes.</text>
</comment>
<comment type="disruption phenotype">
    <text evidence="3 4">Decreases expression of genes encoding virulence proteins (PubMed:19229334). Not essential, it has a diminished capacity to survive in murine macrophages (PubMed:8168923). Decreases virulence in mouse (PubMed:19229334).</text>
</comment>
<comment type="similarity">
    <text evidence="2">Belongs to the SmpB family.</text>
</comment>
<dbReference type="EMBL" id="AE006468">
    <property type="protein sequence ID" value="AAL21577.1"/>
    <property type="molecule type" value="Genomic_DNA"/>
</dbReference>
<dbReference type="EMBL" id="U06139">
    <property type="status" value="NOT_ANNOTATED_CDS"/>
    <property type="molecule type" value="Genomic_DNA"/>
</dbReference>
<dbReference type="RefSeq" id="NP_461618.1">
    <property type="nucleotide sequence ID" value="NC_003197.2"/>
</dbReference>
<dbReference type="RefSeq" id="WP_001518569.1">
    <property type="nucleotide sequence ID" value="NC_003197.2"/>
</dbReference>
<dbReference type="SMR" id="P0A2G1"/>
<dbReference type="STRING" id="99287.STM2688"/>
<dbReference type="PaxDb" id="99287-STM2688"/>
<dbReference type="GeneID" id="1254211"/>
<dbReference type="GeneID" id="66757102"/>
<dbReference type="KEGG" id="stm:STM2688"/>
<dbReference type="PATRIC" id="fig|99287.12.peg.2833"/>
<dbReference type="HOGENOM" id="CLU_108953_3_0_6"/>
<dbReference type="OMA" id="WTNHSAR"/>
<dbReference type="PhylomeDB" id="P0A2G1"/>
<dbReference type="BioCyc" id="SENT99287:STM2688-MONOMER"/>
<dbReference type="PHI-base" id="PHI:2681"/>
<dbReference type="Proteomes" id="UP000001014">
    <property type="component" value="Chromosome"/>
</dbReference>
<dbReference type="GO" id="GO:0005829">
    <property type="term" value="C:cytosol"/>
    <property type="evidence" value="ECO:0000318"/>
    <property type="project" value="GO_Central"/>
</dbReference>
<dbReference type="GO" id="GO:0003723">
    <property type="term" value="F:RNA binding"/>
    <property type="evidence" value="ECO:0000318"/>
    <property type="project" value="GO_Central"/>
</dbReference>
<dbReference type="GO" id="GO:0070929">
    <property type="term" value="P:trans-translation"/>
    <property type="evidence" value="ECO:0007669"/>
    <property type="project" value="UniProtKB-UniRule"/>
</dbReference>
<dbReference type="CDD" id="cd09294">
    <property type="entry name" value="SmpB"/>
    <property type="match status" value="1"/>
</dbReference>
<dbReference type="FunFam" id="2.40.280.10:FF:000001">
    <property type="entry name" value="SsrA-binding protein"/>
    <property type="match status" value="1"/>
</dbReference>
<dbReference type="Gene3D" id="2.40.280.10">
    <property type="match status" value="1"/>
</dbReference>
<dbReference type="HAMAP" id="MF_00023">
    <property type="entry name" value="SmpB"/>
    <property type="match status" value="1"/>
</dbReference>
<dbReference type="InterPro" id="IPR023620">
    <property type="entry name" value="SmpB"/>
</dbReference>
<dbReference type="InterPro" id="IPR000037">
    <property type="entry name" value="SsrA-bd_prot"/>
</dbReference>
<dbReference type="InterPro" id="IPR020081">
    <property type="entry name" value="SsrA-bd_prot_CS"/>
</dbReference>
<dbReference type="NCBIfam" id="NF003843">
    <property type="entry name" value="PRK05422.1"/>
    <property type="match status" value="1"/>
</dbReference>
<dbReference type="NCBIfam" id="TIGR00086">
    <property type="entry name" value="smpB"/>
    <property type="match status" value="1"/>
</dbReference>
<dbReference type="PANTHER" id="PTHR30308:SF2">
    <property type="entry name" value="SSRA-BINDING PROTEIN"/>
    <property type="match status" value="1"/>
</dbReference>
<dbReference type="PANTHER" id="PTHR30308">
    <property type="entry name" value="TMRNA-BINDING COMPONENT OF TRANS-TRANSLATION TAGGING COMPLEX"/>
    <property type="match status" value="1"/>
</dbReference>
<dbReference type="Pfam" id="PF01668">
    <property type="entry name" value="SmpB"/>
    <property type="match status" value="1"/>
</dbReference>
<dbReference type="SUPFAM" id="SSF74982">
    <property type="entry name" value="Small protein B (SmpB)"/>
    <property type="match status" value="1"/>
</dbReference>
<dbReference type="PROSITE" id="PS01317">
    <property type="entry name" value="SSRP"/>
    <property type="match status" value="1"/>
</dbReference>
<gene>
    <name evidence="2" type="primary">smpB</name>
    <name type="synonym">smqB</name>
    <name type="ordered locus">STM2688</name>
</gene>
<accession>P0A2G1</accession>
<accession>P43658</accession>
<name>SSRP_SALTY</name>
<protein>
    <recommendedName>
        <fullName evidence="2">SsrA-binding protein</fullName>
    </recommendedName>
    <alternativeName>
        <fullName evidence="2">Small protein B</fullName>
    </alternativeName>
</protein>
<proteinExistence type="inferred from homology"/>
<keyword id="KW-0963">Cytoplasm</keyword>
<keyword id="KW-1185">Reference proteome</keyword>
<keyword id="KW-0694">RNA-binding</keyword>
<reference key="1">
    <citation type="journal article" date="2001" name="Nature">
        <title>Complete genome sequence of Salmonella enterica serovar Typhimurium LT2.</title>
        <authorList>
            <person name="McClelland M."/>
            <person name="Sanderson K.E."/>
            <person name="Spieth J."/>
            <person name="Clifton S.W."/>
            <person name="Latreille P."/>
            <person name="Courtney L."/>
            <person name="Porwollik S."/>
            <person name="Ali J."/>
            <person name="Dante M."/>
            <person name="Du F."/>
            <person name="Hou S."/>
            <person name="Layman D."/>
            <person name="Leonard S."/>
            <person name="Nguyen C."/>
            <person name="Scott K."/>
            <person name="Holmes A."/>
            <person name="Grewal N."/>
            <person name="Mulvaney E."/>
            <person name="Ryan E."/>
            <person name="Sun H."/>
            <person name="Florea L."/>
            <person name="Miller W."/>
            <person name="Stoneking T."/>
            <person name="Nhan M."/>
            <person name="Waterston R."/>
            <person name="Wilson R.K."/>
        </authorList>
    </citation>
    <scope>NUCLEOTIDE SEQUENCE [LARGE SCALE GENOMIC DNA]</scope>
    <source>
        <strain>LT2 / SGSC1412 / ATCC 700720</strain>
    </source>
</reference>
<reference key="2">
    <citation type="journal article" date="1994" name="Infect. Immun.">
        <title>Salmonella typhimurium loci involved in survival within macrophages.</title>
        <authorList>
            <person name="Baumler A.J."/>
            <person name="Kusters J.G."/>
            <person name="Stojiljkovic I."/>
            <person name="Heffron F."/>
        </authorList>
    </citation>
    <scope>NUCLEOTIDE SEQUENCE [GENOMIC DNA] OF 10-49</scope>
    <scope>DISRUPTION PHENOTYPE</scope>
    <source>
        <strain>ATCC 14028 / Isolate MS7481</strain>
    </source>
</reference>
<reference key="3">
    <citation type="journal article" date="2009" name="PLoS Pathog.">
        <title>Coordinated regulation of virulence during systemic infection of Salmonella enterica serovar Typhimurium.</title>
        <authorList>
            <person name="Yoon H."/>
            <person name="McDermott J.E."/>
            <person name="Porwollik S."/>
            <person name="McClelland M."/>
            <person name="Heffron F."/>
        </authorList>
    </citation>
    <scope>DISRUPTION PHENOTYPE</scope>
    <source>
        <strain evidence="5">14028s / SGSC 2262</strain>
    </source>
</reference>